<protein>
    <recommendedName>
        <fullName evidence="1">D-alanyl carrier protein</fullName>
        <shortName evidence="1">DCP</shortName>
    </recommendedName>
    <alternativeName>
        <fullName evidence="1">D-alanine--poly(phosphoribitol) ligase subunit 2</fullName>
    </alternativeName>
</protein>
<proteinExistence type="inferred from homology"/>
<gene>
    <name evidence="1" type="primary">dltC</name>
    <name type="ordered locus">SAS0804</name>
</gene>
<dbReference type="EMBL" id="BX571857">
    <property type="protein sequence ID" value="CAG42579.1"/>
    <property type="molecule type" value="Genomic_DNA"/>
</dbReference>
<dbReference type="RefSeq" id="WP_000395692.1">
    <property type="nucleotide sequence ID" value="NC_002953.3"/>
</dbReference>
<dbReference type="SMR" id="Q6GAZ2"/>
<dbReference type="GeneID" id="98345253"/>
<dbReference type="KEGG" id="sas:SAS0804"/>
<dbReference type="HOGENOM" id="CLU_108696_19_0_9"/>
<dbReference type="UniPathway" id="UPA00556"/>
<dbReference type="GO" id="GO:0005737">
    <property type="term" value="C:cytoplasm"/>
    <property type="evidence" value="ECO:0007669"/>
    <property type="project" value="UniProtKB-SubCell"/>
</dbReference>
<dbReference type="GO" id="GO:0036370">
    <property type="term" value="F:D-alanyl carrier activity"/>
    <property type="evidence" value="ECO:0007669"/>
    <property type="project" value="UniProtKB-UniRule"/>
</dbReference>
<dbReference type="GO" id="GO:0071555">
    <property type="term" value="P:cell wall organization"/>
    <property type="evidence" value="ECO:0007669"/>
    <property type="project" value="UniProtKB-KW"/>
</dbReference>
<dbReference type="GO" id="GO:0070395">
    <property type="term" value="P:lipoteichoic acid biosynthetic process"/>
    <property type="evidence" value="ECO:0007669"/>
    <property type="project" value="UniProtKB-UniRule"/>
</dbReference>
<dbReference type="Gene3D" id="1.10.1200.10">
    <property type="entry name" value="ACP-like"/>
    <property type="match status" value="1"/>
</dbReference>
<dbReference type="HAMAP" id="MF_00565">
    <property type="entry name" value="DltC"/>
    <property type="match status" value="1"/>
</dbReference>
<dbReference type="InterPro" id="IPR036736">
    <property type="entry name" value="ACP-like_sf"/>
</dbReference>
<dbReference type="InterPro" id="IPR003230">
    <property type="entry name" value="DltC"/>
</dbReference>
<dbReference type="InterPro" id="IPR009081">
    <property type="entry name" value="PP-bd_ACP"/>
</dbReference>
<dbReference type="NCBIfam" id="TIGR01688">
    <property type="entry name" value="dltC"/>
    <property type="match status" value="1"/>
</dbReference>
<dbReference type="NCBIfam" id="NF003464">
    <property type="entry name" value="PRK05087.1"/>
    <property type="match status" value="1"/>
</dbReference>
<dbReference type="Pfam" id="PF00550">
    <property type="entry name" value="PP-binding"/>
    <property type="match status" value="1"/>
</dbReference>
<dbReference type="SUPFAM" id="SSF47336">
    <property type="entry name" value="ACP-like"/>
    <property type="match status" value="1"/>
</dbReference>
<dbReference type="PROSITE" id="PS50075">
    <property type="entry name" value="CARRIER"/>
    <property type="match status" value="1"/>
</dbReference>
<reference key="1">
    <citation type="journal article" date="2004" name="Proc. Natl. Acad. Sci. U.S.A.">
        <title>Complete genomes of two clinical Staphylococcus aureus strains: evidence for the rapid evolution of virulence and drug resistance.</title>
        <authorList>
            <person name="Holden M.T.G."/>
            <person name="Feil E.J."/>
            <person name="Lindsay J.A."/>
            <person name="Peacock S.J."/>
            <person name="Day N.P.J."/>
            <person name="Enright M.C."/>
            <person name="Foster T.J."/>
            <person name="Moore C.E."/>
            <person name="Hurst L."/>
            <person name="Atkin R."/>
            <person name="Barron A."/>
            <person name="Bason N."/>
            <person name="Bentley S.D."/>
            <person name="Chillingworth C."/>
            <person name="Chillingworth T."/>
            <person name="Churcher C."/>
            <person name="Clark L."/>
            <person name="Corton C."/>
            <person name="Cronin A."/>
            <person name="Doggett J."/>
            <person name="Dowd L."/>
            <person name="Feltwell T."/>
            <person name="Hance Z."/>
            <person name="Harris B."/>
            <person name="Hauser H."/>
            <person name="Holroyd S."/>
            <person name="Jagels K."/>
            <person name="James K.D."/>
            <person name="Lennard N."/>
            <person name="Line A."/>
            <person name="Mayes R."/>
            <person name="Moule S."/>
            <person name="Mungall K."/>
            <person name="Ormond D."/>
            <person name="Quail M.A."/>
            <person name="Rabbinowitsch E."/>
            <person name="Rutherford K.M."/>
            <person name="Sanders M."/>
            <person name="Sharp S."/>
            <person name="Simmonds M."/>
            <person name="Stevens K."/>
            <person name="Whitehead S."/>
            <person name="Barrell B.G."/>
            <person name="Spratt B.G."/>
            <person name="Parkhill J."/>
        </authorList>
    </citation>
    <scope>NUCLEOTIDE SEQUENCE [LARGE SCALE GENOMIC DNA]</scope>
    <source>
        <strain>MSSA476</strain>
    </source>
</reference>
<keyword id="KW-0961">Cell wall biogenesis/degradation</keyword>
<keyword id="KW-0963">Cytoplasm</keyword>
<keyword id="KW-0596">Phosphopantetheine</keyword>
<keyword id="KW-0597">Phosphoprotein</keyword>
<name>DLTC_STAAS</name>
<evidence type="ECO:0000255" key="1">
    <source>
        <dbReference type="HAMAP-Rule" id="MF_00565"/>
    </source>
</evidence>
<accession>Q6GAZ2</accession>
<feature type="chain" id="PRO_0000213101" description="D-alanyl carrier protein">
    <location>
        <begin position="1"/>
        <end position="78"/>
    </location>
</feature>
<feature type="domain" description="Carrier" evidence="1">
    <location>
        <begin position="1"/>
        <end position="78"/>
    </location>
</feature>
<feature type="modified residue" description="O-(pantetheine 4'-phosphoryl)serine" evidence="1">
    <location>
        <position position="36"/>
    </location>
</feature>
<sequence length="78" mass="9063">MEFREQVLNLLAEVAENDIVKENPDVEIFEEGIIDSFQTVGLLLEIQNKLDIEVSIMDFDRDEWATPNKIVEALEELR</sequence>
<comment type="function">
    <text evidence="1">Carrier protein involved in the D-alanylation of lipoteichoic acid (LTA). The loading of thioester-linked D-alanine onto DltC is catalyzed by D-alanine--D-alanyl carrier protein ligase DltA. The DltC-carried D-alanyl group is further transferred to cell membrane phosphatidylglycerol (PG) by forming an ester bond, probably catalyzed by DltD. D-alanylation of LTA plays an important role in modulating the properties of the cell wall in Gram-positive bacteria, influencing the net charge of the cell wall.</text>
</comment>
<comment type="pathway">
    <text evidence="1">Cell wall biogenesis; lipoteichoic acid biosynthesis.</text>
</comment>
<comment type="subcellular location">
    <subcellularLocation>
        <location evidence="1">Cytoplasm</location>
    </subcellularLocation>
</comment>
<comment type="PTM">
    <text evidence="1">4'-phosphopantetheine is transferred from CoA to a specific serine of apo-DCP.</text>
</comment>
<comment type="similarity">
    <text evidence="1">Belongs to the DltC family.</text>
</comment>
<organism>
    <name type="scientific">Staphylococcus aureus (strain MSSA476)</name>
    <dbReference type="NCBI Taxonomy" id="282459"/>
    <lineage>
        <taxon>Bacteria</taxon>
        <taxon>Bacillati</taxon>
        <taxon>Bacillota</taxon>
        <taxon>Bacilli</taxon>
        <taxon>Bacillales</taxon>
        <taxon>Staphylococcaceae</taxon>
        <taxon>Staphylococcus</taxon>
    </lineage>
</organism>